<name>RIMP_LEGPL</name>
<dbReference type="EMBL" id="CR628337">
    <property type="protein sequence ID" value="CAH16932.1"/>
    <property type="status" value="ALT_INIT"/>
    <property type="molecule type" value="Genomic_DNA"/>
</dbReference>
<dbReference type="RefSeq" id="WP_041173832.1">
    <property type="nucleotide sequence ID" value="NC_006369.1"/>
</dbReference>
<dbReference type="SMR" id="Q5WT34"/>
<dbReference type="KEGG" id="lpf:lpl2691"/>
<dbReference type="LegioList" id="lpl2691"/>
<dbReference type="HOGENOM" id="CLU_070525_1_1_6"/>
<dbReference type="Proteomes" id="UP000002517">
    <property type="component" value="Chromosome"/>
</dbReference>
<dbReference type="GO" id="GO:0005829">
    <property type="term" value="C:cytosol"/>
    <property type="evidence" value="ECO:0007669"/>
    <property type="project" value="TreeGrafter"/>
</dbReference>
<dbReference type="GO" id="GO:0000028">
    <property type="term" value="P:ribosomal small subunit assembly"/>
    <property type="evidence" value="ECO:0007669"/>
    <property type="project" value="TreeGrafter"/>
</dbReference>
<dbReference type="GO" id="GO:0006412">
    <property type="term" value="P:translation"/>
    <property type="evidence" value="ECO:0007669"/>
    <property type="project" value="TreeGrafter"/>
</dbReference>
<dbReference type="CDD" id="cd01734">
    <property type="entry name" value="YlxS_C"/>
    <property type="match status" value="1"/>
</dbReference>
<dbReference type="FunFam" id="3.30.300.70:FF:000001">
    <property type="entry name" value="Ribosome maturation factor RimP"/>
    <property type="match status" value="1"/>
</dbReference>
<dbReference type="Gene3D" id="2.30.30.180">
    <property type="entry name" value="Ribosome maturation factor RimP, C-terminal domain"/>
    <property type="match status" value="1"/>
</dbReference>
<dbReference type="Gene3D" id="3.30.300.70">
    <property type="entry name" value="RimP-like superfamily, N-terminal"/>
    <property type="match status" value="1"/>
</dbReference>
<dbReference type="HAMAP" id="MF_01077">
    <property type="entry name" value="RimP"/>
    <property type="match status" value="1"/>
</dbReference>
<dbReference type="InterPro" id="IPR003728">
    <property type="entry name" value="Ribosome_maturation_RimP"/>
</dbReference>
<dbReference type="InterPro" id="IPR028998">
    <property type="entry name" value="RimP_C"/>
</dbReference>
<dbReference type="InterPro" id="IPR036847">
    <property type="entry name" value="RimP_C_sf"/>
</dbReference>
<dbReference type="InterPro" id="IPR028989">
    <property type="entry name" value="RimP_N"/>
</dbReference>
<dbReference type="InterPro" id="IPR035956">
    <property type="entry name" value="RimP_N_sf"/>
</dbReference>
<dbReference type="NCBIfam" id="NF000927">
    <property type="entry name" value="PRK00092.1-1"/>
    <property type="match status" value="1"/>
</dbReference>
<dbReference type="PANTHER" id="PTHR33867">
    <property type="entry name" value="RIBOSOME MATURATION FACTOR RIMP"/>
    <property type="match status" value="1"/>
</dbReference>
<dbReference type="PANTHER" id="PTHR33867:SF1">
    <property type="entry name" value="RIBOSOME MATURATION FACTOR RIMP"/>
    <property type="match status" value="1"/>
</dbReference>
<dbReference type="Pfam" id="PF17384">
    <property type="entry name" value="DUF150_C"/>
    <property type="match status" value="1"/>
</dbReference>
<dbReference type="Pfam" id="PF02576">
    <property type="entry name" value="RimP_N"/>
    <property type="match status" value="1"/>
</dbReference>
<dbReference type="SUPFAM" id="SSF74942">
    <property type="entry name" value="YhbC-like, C-terminal domain"/>
    <property type="match status" value="1"/>
</dbReference>
<dbReference type="SUPFAM" id="SSF75420">
    <property type="entry name" value="YhbC-like, N-terminal domain"/>
    <property type="match status" value="1"/>
</dbReference>
<gene>
    <name evidence="1" type="primary">rimP</name>
    <name type="ordered locus">lpl2691</name>
</gene>
<accession>Q5WT34</accession>
<evidence type="ECO:0000255" key="1">
    <source>
        <dbReference type="HAMAP-Rule" id="MF_01077"/>
    </source>
</evidence>
<evidence type="ECO:0000305" key="2"/>
<keyword id="KW-0963">Cytoplasm</keyword>
<keyword id="KW-0690">Ribosome biogenesis</keyword>
<comment type="function">
    <text evidence="1">Required for maturation of 30S ribosomal subunits.</text>
</comment>
<comment type="subcellular location">
    <subcellularLocation>
        <location evidence="1">Cytoplasm</location>
    </subcellularLocation>
</comment>
<comment type="similarity">
    <text evidence="1">Belongs to the RimP family.</text>
</comment>
<comment type="sequence caution" evidence="2">
    <conflict type="erroneous initiation">
        <sequence resource="EMBL-CDS" id="CAH16932"/>
    </conflict>
</comment>
<sequence>MINDDLIVLLEPIIKNMGYELWGCEYLSQGKHSLLRIYIDKPDGIGIDDCQEVSKQVSAMLDVEDPIPGHYSLEISSPGIPRPLFSIWQYQRYLGYEIHVKTFKPVNGKRKLSGIIVSASGDTIVLDINNEHQEILLSNIVKANLTV</sequence>
<reference key="1">
    <citation type="journal article" date="2004" name="Nat. Genet.">
        <title>Evidence in the Legionella pneumophila genome for exploitation of host cell functions and high genome plasticity.</title>
        <authorList>
            <person name="Cazalet C."/>
            <person name="Rusniok C."/>
            <person name="Brueggemann H."/>
            <person name="Zidane N."/>
            <person name="Magnier A."/>
            <person name="Ma L."/>
            <person name="Tichit M."/>
            <person name="Jarraud S."/>
            <person name="Bouchier C."/>
            <person name="Vandenesch F."/>
            <person name="Kunst F."/>
            <person name="Etienne J."/>
            <person name="Glaser P."/>
            <person name="Buchrieser C."/>
        </authorList>
    </citation>
    <scope>NUCLEOTIDE SEQUENCE [LARGE SCALE GENOMIC DNA]</scope>
    <source>
        <strain>Lens</strain>
    </source>
</reference>
<proteinExistence type="inferred from homology"/>
<feature type="chain" id="PRO_0000229246" description="Ribosome maturation factor RimP">
    <location>
        <begin position="1"/>
        <end position="147"/>
    </location>
</feature>
<protein>
    <recommendedName>
        <fullName evidence="1">Ribosome maturation factor RimP</fullName>
    </recommendedName>
</protein>
<organism>
    <name type="scientific">Legionella pneumophila (strain Lens)</name>
    <dbReference type="NCBI Taxonomy" id="297245"/>
    <lineage>
        <taxon>Bacteria</taxon>
        <taxon>Pseudomonadati</taxon>
        <taxon>Pseudomonadota</taxon>
        <taxon>Gammaproteobacteria</taxon>
        <taxon>Legionellales</taxon>
        <taxon>Legionellaceae</taxon>
        <taxon>Legionella</taxon>
    </lineage>
</organism>